<protein>
    <recommendedName>
        <fullName evidence="1">Small ribosomal subunit protein uS3</fullName>
    </recommendedName>
    <alternativeName>
        <fullName evidence="3">30S ribosomal protein S3</fullName>
    </alternativeName>
</protein>
<name>RS3_BRADU</name>
<proteinExistence type="inferred from homology"/>
<sequence length="241" mass="26940">MGQKINPIGLRLGINRTWDSRWFAGKQEYGKLLHEDVKIREILHKELKQAAVARIVIERPHKKCRVTIHSARPGVVIGKKGADIDKLRKRVADITSSDVVINIVEIRKPELDATLVAESIAQQLERRVAFRRAMKRAVQSAMRLGAEGIRINCSGRLGGAEIARMEWYREGRVPLHTLRADIDYGVATAFTTFGTCGVKVWIFKGEILEHDPMAQDKRMAEGETGGGGDRGGRQRRDNAAV</sequence>
<reference key="1">
    <citation type="journal article" date="2002" name="DNA Res.">
        <title>Complete genomic sequence of nitrogen-fixing symbiotic bacterium Bradyrhizobium japonicum USDA110.</title>
        <authorList>
            <person name="Kaneko T."/>
            <person name="Nakamura Y."/>
            <person name="Sato S."/>
            <person name="Minamisawa K."/>
            <person name="Uchiumi T."/>
            <person name="Sasamoto S."/>
            <person name="Watanabe A."/>
            <person name="Idesawa K."/>
            <person name="Iriguchi M."/>
            <person name="Kawashima K."/>
            <person name="Kohara M."/>
            <person name="Matsumoto M."/>
            <person name="Shimpo S."/>
            <person name="Tsuruoka H."/>
            <person name="Wada T."/>
            <person name="Yamada M."/>
            <person name="Tabata S."/>
        </authorList>
    </citation>
    <scope>NUCLEOTIDE SEQUENCE [LARGE SCALE GENOMIC DNA]</scope>
    <source>
        <strain>JCM 10833 / BCRC 13528 / IAM 13628 / NBRC 14792 / USDA 110</strain>
    </source>
</reference>
<accession>Q89J90</accession>
<dbReference type="EMBL" id="BA000040">
    <property type="protein sequence ID" value="BAC50659.1"/>
    <property type="molecule type" value="Genomic_DNA"/>
</dbReference>
<dbReference type="RefSeq" id="NP_772034.1">
    <property type="nucleotide sequence ID" value="NC_004463.1"/>
</dbReference>
<dbReference type="RefSeq" id="WP_011088146.1">
    <property type="nucleotide sequence ID" value="NC_004463.1"/>
</dbReference>
<dbReference type="SMR" id="Q89J90"/>
<dbReference type="FunCoup" id="Q89J90">
    <property type="interactions" value="958"/>
</dbReference>
<dbReference type="STRING" id="224911.AAV28_24380"/>
<dbReference type="EnsemblBacteria" id="BAC50659">
    <property type="protein sequence ID" value="BAC50659"/>
    <property type="gene ID" value="BAC50659"/>
</dbReference>
<dbReference type="GeneID" id="46492392"/>
<dbReference type="KEGG" id="bja:bll5394"/>
<dbReference type="PATRIC" id="fig|224911.44.peg.5293"/>
<dbReference type="eggNOG" id="COG0092">
    <property type="taxonomic scope" value="Bacteria"/>
</dbReference>
<dbReference type="HOGENOM" id="CLU_058591_0_2_5"/>
<dbReference type="InParanoid" id="Q89J90"/>
<dbReference type="OrthoDB" id="9806396at2"/>
<dbReference type="PhylomeDB" id="Q89J90"/>
<dbReference type="Proteomes" id="UP000002526">
    <property type="component" value="Chromosome"/>
</dbReference>
<dbReference type="GO" id="GO:0022627">
    <property type="term" value="C:cytosolic small ribosomal subunit"/>
    <property type="evidence" value="ECO:0000318"/>
    <property type="project" value="GO_Central"/>
</dbReference>
<dbReference type="GO" id="GO:0003729">
    <property type="term" value="F:mRNA binding"/>
    <property type="evidence" value="ECO:0007669"/>
    <property type="project" value="UniProtKB-UniRule"/>
</dbReference>
<dbReference type="GO" id="GO:0019843">
    <property type="term" value="F:rRNA binding"/>
    <property type="evidence" value="ECO:0007669"/>
    <property type="project" value="UniProtKB-UniRule"/>
</dbReference>
<dbReference type="GO" id="GO:0003735">
    <property type="term" value="F:structural constituent of ribosome"/>
    <property type="evidence" value="ECO:0000318"/>
    <property type="project" value="GO_Central"/>
</dbReference>
<dbReference type="GO" id="GO:0006412">
    <property type="term" value="P:translation"/>
    <property type="evidence" value="ECO:0007669"/>
    <property type="project" value="UniProtKB-UniRule"/>
</dbReference>
<dbReference type="CDD" id="cd02412">
    <property type="entry name" value="KH-II_30S_S3"/>
    <property type="match status" value="1"/>
</dbReference>
<dbReference type="FunFam" id="3.30.1140.32:FF:000009">
    <property type="entry name" value="30S ribosomal protein S3"/>
    <property type="match status" value="1"/>
</dbReference>
<dbReference type="FunFam" id="3.30.300.20:FF:000001">
    <property type="entry name" value="30S ribosomal protein S3"/>
    <property type="match status" value="1"/>
</dbReference>
<dbReference type="Gene3D" id="3.30.300.20">
    <property type="match status" value="1"/>
</dbReference>
<dbReference type="Gene3D" id="3.30.1140.32">
    <property type="entry name" value="Ribosomal protein S3, C-terminal domain"/>
    <property type="match status" value="1"/>
</dbReference>
<dbReference type="HAMAP" id="MF_01309_B">
    <property type="entry name" value="Ribosomal_uS3_B"/>
    <property type="match status" value="1"/>
</dbReference>
<dbReference type="InterPro" id="IPR004087">
    <property type="entry name" value="KH_dom"/>
</dbReference>
<dbReference type="InterPro" id="IPR015946">
    <property type="entry name" value="KH_dom-like_a/b"/>
</dbReference>
<dbReference type="InterPro" id="IPR004044">
    <property type="entry name" value="KH_dom_type_2"/>
</dbReference>
<dbReference type="InterPro" id="IPR009019">
    <property type="entry name" value="KH_sf_prok-type"/>
</dbReference>
<dbReference type="InterPro" id="IPR036419">
    <property type="entry name" value="Ribosomal_S3_C_sf"/>
</dbReference>
<dbReference type="InterPro" id="IPR005704">
    <property type="entry name" value="Ribosomal_uS3_bac-typ"/>
</dbReference>
<dbReference type="InterPro" id="IPR001351">
    <property type="entry name" value="Ribosomal_uS3_C"/>
</dbReference>
<dbReference type="InterPro" id="IPR018280">
    <property type="entry name" value="Ribosomal_uS3_CS"/>
</dbReference>
<dbReference type="NCBIfam" id="TIGR01009">
    <property type="entry name" value="rpsC_bact"/>
    <property type="match status" value="1"/>
</dbReference>
<dbReference type="PANTHER" id="PTHR11760">
    <property type="entry name" value="30S/40S RIBOSOMAL PROTEIN S3"/>
    <property type="match status" value="1"/>
</dbReference>
<dbReference type="PANTHER" id="PTHR11760:SF19">
    <property type="entry name" value="SMALL RIBOSOMAL SUBUNIT PROTEIN US3C"/>
    <property type="match status" value="1"/>
</dbReference>
<dbReference type="Pfam" id="PF07650">
    <property type="entry name" value="KH_2"/>
    <property type="match status" value="1"/>
</dbReference>
<dbReference type="Pfam" id="PF00189">
    <property type="entry name" value="Ribosomal_S3_C"/>
    <property type="match status" value="1"/>
</dbReference>
<dbReference type="SMART" id="SM00322">
    <property type="entry name" value="KH"/>
    <property type="match status" value="1"/>
</dbReference>
<dbReference type="SUPFAM" id="SSF54814">
    <property type="entry name" value="Prokaryotic type KH domain (KH-domain type II)"/>
    <property type="match status" value="1"/>
</dbReference>
<dbReference type="SUPFAM" id="SSF54821">
    <property type="entry name" value="Ribosomal protein S3 C-terminal domain"/>
    <property type="match status" value="1"/>
</dbReference>
<dbReference type="PROSITE" id="PS50823">
    <property type="entry name" value="KH_TYPE_2"/>
    <property type="match status" value="1"/>
</dbReference>
<dbReference type="PROSITE" id="PS00548">
    <property type="entry name" value="RIBOSOMAL_S3"/>
    <property type="match status" value="1"/>
</dbReference>
<feature type="chain" id="PRO_0000130084" description="Small ribosomal subunit protein uS3">
    <location>
        <begin position="1"/>
        <end position="241"/>
    </location>
</feature>
<feature type="domain" description="KH type-2" evidence="1">
    <location>
        <begin position="39"/>
        <end position="107"/>
    </location>
</feature>
<feature type="region of interest" description="Disordered" evidence="2">
    <location>
        <begin position="217"/>
        <end position="241"/>
    </location>
</feature>
<feature type="compositionally biased region" description="Basic and acidic residues" evidence="2">
    <location>
        <begin position="230"/>
        <end position="241"/>
    </location>
</feature>
<gene>
    <name evidence="1" type="primary">rpsC</name>
    <name type="ordered locus">bll5394</name>
</gene>
<organism>
    <name type="scientific">Bradyrhizobium diazoefficiens (strain JCM 10833 / BCRC 13528 / IAM 13628 / NBRC 14792 / USDA 110)</name>
    <dbReference type="NCBI Taxonomy" id="224911"/>
    <lineage>
        <taxon>Bacteria</taxon>
        <taxon>Pseudomonadati</taxon>
        <taxon>Pseudomonadota</taxon>
        <taxon>Alphaproteobacteria</taxon>
        <taxon>Hyphomicrobiales</taxon>
        <taxon>Nitrobacteraceae</taxon>
        <taxon>Bradyrhizobium</taxon>
    </lineage>
</organism>
<keyword id="KW-1185">Reference proteome</keyword>
<keyword id="KW-0687">Ribonucleoprotein</keyword>
<keyword id="KW-0689">Ribosomal protein</keyword>
<keyword id="KW-0694">RNA-binding</keyword>
<keyword id="KW-0699">rRNA-binding</keyword>
<evidence type="ECO:0000255" key="1">
    <source>
        <dbReference type="HAMAP-Rule" id="MF_01309"/>
    </source>
</evidence>
<evidence type="ECO:0000256" key="2">
    <source>
        <dbReference type="SAM" id="MobiDB-lite"/>
    </source>
</evidence>
<evidence type="ECO:0000305" key="3"/>
<comment type="function">
    <text evidence="1">Binds the lower part of the 30S subunit head. Binds mRNA in the 70S ribosome, positioning it for translation.</text>
</comment>
<comment type="subunit">
    <text evidence="1">Part of the 30S ribosomal subunit. Forms a tight complex with proteins S10 and S14.</text>
</comment>
<comment type="similarity">
    <text evidence="1">Belongs to the universal ribosomal protein uS3 family.</text>
</comment>